<proteinExistence type="inferred from homology"/>
<evidence type="ECO:0000255" key="1">
    <source>
        <dbReference type="HAMAP-Rule" id="MF_01025"/>
    </source>
</evidence>
<dbReference type="EC" id="2.3.3.13" evidence="1"/>
<dbReference type="EMBL" id="BX571871">
    <property type="protein sequence ID" value="CAE16046.1"/>
    <property type="molecule type" value="Genomic_DNA"/>
</dbReference>
<dbReference type="RefSeq" id="WP_011147836.1">
    <property type="nucleotide sequence ID" value="NC_005126.1"/>
</dbReference>
<dbReference type="SMR" id="Q7N129"/>
<dbReference type="STRING" id="243265.plu3673"/>
<dbReference type="GeneID" id="48849916"/>
<dbReference type="KEGG" id="plu:plu3673"/>
<dbReference type="eggNOG" id="COG0119">
    <property type="taxonomic scope" value="Bacteria"/>
</dbReference>
<dbReference type="HOGENOM" id="CLU_022158_0_1_6"/>
<dbReference type="OrthoDB" id="9803573at2"/>
<dbReference type="UniPathway" id="UPA00048">
    <property type="reaction ID" value="UER00070"/>
</dbReference>
<dbReference type="Proteomes" id="UP000002514">
    <property type="component" value="Chromosome"/>
</dbReference>
<dbReference type="GO" id="GO:0005829">
    <property type="term" value="C:cytosol"/>
    <property type="evidence" value="ECO:0007669"/>
    <property type="project" value="TreeGrafter"/>
</dbReference>
<dbReference type="GO" id="GO:0003852">
    <property type="term" value="F:2-isopropylmalate synthase activity"/>
    <property type="evidence" value="ECO:0007669"/>
    <property type="project" value="UniProtKB-UniRule"/>
</dbReference>
<dbReference type="GO" id="GO:0003985">
    <property type="term" value="F:acetyl-CoA C-acetyltransferase activity"/>
    <property type="evidence" value="ECO:0007669"/>
    <property type="project" value="UniProtKB-UniRule"/>
</dbReference>
<dbReference type="GO" id="GO:0030145">
    <property type="term" value="F:manganese ion binding"/>
    <property type="evidence" value="ECO:0007669"/>
    <property type="project" value="UniProtKB-UniRule"/>
</dbReference>
<dbReference type="GO" id="GO:0009098">
    <property type="term" value="P:L-leucine biosynthetic process"/>
    <property type="evidence" value="ECO:0007669"/>
    <property type="project" value="UniProtKB-UniRule"/>
</dbReference>
<dbReference type="CDD" id="cd07940">
    <property type="entry name" value="DRE_TIM_IPMS"/>
    <property type="match status" value="1"/>
</dbReference>
<dbReference type="FunFam" id="1.10.238.260:FF:000001">
    <property type="entry name" value="2-isopropylmalate synthase"/>
    <property type="match status" value="1"/>
</dbReference>
<dbReference type="FunFam" id="3.20.20.70:FF:000010">
    <property type="entry name" value="2-isopropylmalate synthase"/>
    <property type="match status" value="1"/>
</dbReference>
<dbReference type="FunFam" id="3.30.160.270:FF:000001">
    <property type="entry name" value="2-isopropylmalate synthase"/>
    <property type="match status" value="1"/>
</dbReference>
<dbReference type="Gene3D" id="1.10.238.260">
    <property type="match status" value="1"/>
</dbReference>
<dbReference type="Gene3D" id="3.30.160.270">
    <property type="match status" value="1"/>
</dbReference>
<dbReference type="Gene3D" id="3.20.20.70">
    <property type="entry name" value="Aldolase class I"/>
    <property type="match status" value="1"/>
</dbReference>
<dbReference type="HAMAP" id="MF_01025">
    <property type="entry name" value="LeuA_type1"/>
    <property type="match status" value="1"/>
</dbReference>
<dbReference type="InterPro" id="IPR050073">
    <property type="entry name" value="2-IPM_HCS-like"/>
</dbReference>
<dbReference type="InterPro" id="IPR013709">
    <property type="entry name" value="2-isopropylmalate_synth_dimer"/>
</dbReference>
<dbReference type="InterPro" id="IPR002034">
    <property type="entry name" value="AIPM/Hcit_synth_CS"/>
</dbReference>
<dbReference type="InterPro" id="IPR013785">
    <property type="entry name" value="Aldolase_TIM"/>
</dbReference>
<dbReference type="InterPro" id="IPR054691">
    <property type="entry name" value="LeuA/HCS_post-cat"/>
</dbReference>
<dbReference type="InterPro" id="IPR036230">
    <property type="entry name" value="LeuA_allosteric_dom_sf"/>
</dbReference>
<dbReference type="InterPro" id="IPR005671">
    <property type="entry name" value="LeuA_bact_synth"/>
</dbReference>
<dbReference type="InterPro" id="IPR000891">
    <property type="entry name" value="PYR_CT"/>
</dbReference>
<dbReference type="NCBIfam" id="TIGR00973">
    <property type="entry name" value="leuA_bact"/>
    <property type="match status" value="1"/>
</dbReference>
<dbReference type="NCBIfam" id="NF002084">
    <property type="entry name" value="PRK00915.1-1"/>
    <property type="match status" value="1"/>
</dbReference>
<dbReference type="NCBIfam" id="NF002086">
    <property type="entry name" value="PRK00915.1-3"/>
    <property type="match status" value="1"/>
</dbReference>
<dbReference type="PANTHER" id="PTHR10277:SF9">
    <property type="entry name" value="2-ISOPROPYLMALATE SYNTHASE 1, CHLOROPLASTIC-RELATED"/>
    <property type="match status" value="1"/>
</dbReference>
<dbReference type="PANTHER" id="PTHR10277">
    <property type="entry name" value="HOMOCITRATE SYNTHASE-RELATED"/>
    <property type="match status" value="1"/>
</dbReference>
<dbReference type="Pfam" id="PF22617">
    <property type="entry name" value="HCS_D2"/>
    <property type="match status" value="1"/>
</dbReference>
<dbReference type="Pfam" id="PF00682">
    <property type="entry name" value="HMGL-like"/>
    <property type="match status" value="1"/>
</dbReference>
<dbReference type="Pfam" id="PF08502">
    <property type="entry name" value="LeuA_dimer"/>
    <property type="match status" value="1"/>
</dbReference>
<dbReference type="SMART" id="SM00917">
    <property type="entry name" value="LeuA_dimer"/>
    <property type="match status" value="1"/>
</dbReference>
<dbReference type="SUPFAM" id="SSF110921">
    <property type="entry name" value="2-isopropylmalate synthase LeuA, allosteric (dimerisation) domain"/>
    <property type="match status" value="1"/>
</dbReference>
<dbReference type="SUPFAM" id="SSF51569">
    <property type="entry name" value="Aldolase"/>
    <property type="match status" value="1"/>
</dbReference>
<dbReference type="PROSITE" id="PS00815">
    <property type="entry name" value="AIPM_HOMOCIT_SYNTH_1"/>
    <property type="match status" value="1"/>
</dbReference>
<dbReference type="PROSITE" id="PS00816">
    <property type="entry name" value="AIPM_HOMOCIT_SYNTH_2"/>
    <property type="match status" value="1"/>
</dbReference>
<dbReference type="PROSITE" id="PS50991">
    <property type="entry name" value="PYR_CT"/>
    <property type="match status" value="1"/>
</dbReference>
<name>LEU1_PHOLL</name>
<accession>Q7N129</accession>
<sequence>MNQQVIIFDTTLRDGEQALQASLCVNEKLQIALALERMGVDIMEVGFPVSSPGDFESVQTIAKQIKNSRVCALARCVEKDIDVAAEALKVADAFRIHVFLATSDLHIESKLKKTFENVMEMATQSIKRARRYTDDVEFSCEDAGRTPIDNLCRIVENAIKAGATTINIPDTVGYTTPYQFGGIITNLIERVPNIDKAIISVHCHDDLGMSVANSITAVQSGARQIEGTINGLGERAGNCSLEEVIMAIKVRQQMLGVYTNINHQEIYRTSQLVSQLCNMPIPANKAIVGSNAFSHSSGIHQDGVLKNRETYEIMTPESIGLKEIQLNLTSRSGRAAVKHRMEEMGYQDKDYDLGSLYEAFLRLADKKGQVFDYDLEALAFINLQQQEPEFFHLDNFNIQSGSNVMATAAVCLVCGKELKSEAATGNGPVDAVYQAISRITEYPIELVSYQLSGKGQGKNALGQVNIVVECFGRRFHGMGLETDIVESSAKAMVHALNCVWRTEQVKKEKQRIQQNTKEMV</sequence>
<organism>
    <name type="scientific">Photorhabdus laumondii subsp. laumondii (strain DSM 15139 / CIP 105565 / TT01)</name>
    <name type="common">Photorhabdus luminescens subsp. laumondii</name>
    <dbReference type="NCBI Taxonomy" id="243265"/>
    <lineage>
        <taxon>Bacteria</taxon>
        <taxon>Pseudomonadati</taxon>
        <taxon>Pseudomonadota</taxon>
        <taxon>Gammaproteobacteria</taxon>
        <taxon>Enterobacterales</taxon>
        <taxon>Morganellaceae</taxon>
        <taxon>Photorhabdus</taxon>
    </lineage>
</organism>
<gene>
    <name evidence="1" type="primary">leuA</name>
    <name type="ordered locus">plu3673</name>
</gene>
<protein>
    <recommendedName>
        <fullName evidence="1">2-isopropylmalate synthase</fullName>
        <ecNumber evidence="1">2.3.3.13</ecNumber>
    </recommendedName>
    <alternativeName>
        <fullName evidence="1">Alpha-IPM synthase</fullName>
    </alternativeName>
    <alternativeName>
        <fullName evidence="1">Alpha-isopropylmalate synthase</fullName>
    </alternativeName>
</protein>
<keyword id="KW-0028">Amino-acid biosynthesis</keyword>
<keyword id="KW-0100">Branched-chain amino acid biosynthesis</keyword>
<keyword id="KW-0963">Cytoplasm</keyword>
<keyword id="KW-0432">Leucine biosynthesis</keyword>
<keyword id="KW-0464">Manganese</keyword>
<keyword id="KW-0479">Metal-binding</keyword>
<keyword id="KW-1185">Reference proteome</keyword>
<keyword id="KW-0808">Transferase</keyword>
<feature type="chain" id="PRO_0000140368" description="2-isopropylmalate synthase">
    <location>
        <begin position="1"/>
        <end position="520"/>
    </location>
</feature>
<feature type="domain" description="Pyruvate carboxyltransferase" evidence="1">
    <location>
        <begin position="5"/>
        <end position="267"/>
    </location>
</feature>
<feature type="region of interest" description="Regulatory domain" evidence="1">
    <location>
        <begin position="392"/>
        <end position="520"/>
    </location>
</feature>
<feature type="binding site" evidence="1">
    <location>
        <position position="14"/>
    </location>
    <ligand>
        <name>Mn(2+)</name>
        <dbReference type="ChEBI" id="CHEBI:29035"/>
    </ligand>
</feature>
<feature type="binding site" evidence="1">
    <location>
        <position position="202"/>
    </location>
    <ligand>
        <name>Mn(2+)</name>
        <dbReference type="ChEBI" id="CHEBI:29035"/>
    </ligand>
</feature>
<feature type="binding site" evidence="1">
    <location>
        <position position="204"/>
    </location>
    <ligand>
        <name>Mn(2+)</name>
        <dbReference type="ChEBI" id="CHEBI:29035"/>
    </ligand>
</feature>
<feature type="binding site" evidence="1">
    <location>
        <position position="238"/>
    </location>
    <ligand>
        <name>Mn(2+)</name>
        <dbReference type="ChEBI" id="CHEBI:29035"/>
    </ligand>
</feature>
<reference key="1">
    <citation type="journal article" date="2003" name="Nat. Biotechnol.">
        <title>The genome sequence of the entomopathogenic bacterium Photorhabdus luminescens.</title>
        <authorList>
            <person name="Duchaud E."/>
            <person name="Rusniok C."/>
            <person name="Frangeul L."/>
            <person name="Buchrieser C."/>
            <person name="Givaudan A."/>
            <person name="Taourit S."/>
            <person name="Bocs S."/>
            <person name="Boursaux-Eude C."/>
            <person name="Chandler M."/>
            <person name="Charles J.-F."/>
            <person name="Dassa E."/>
            <person name="Derose R."/>
            <person name="Derzelle S."/>
            <person name="Freyssinet G."/>
            <person name="Gaudriault S."/>
            <person name="Medigue C."/>
            <person name="Lanois A."/>
            <person name="Powell K."/>
            <person name="Siguier P."/>
            <person name="Vincent R."/>
            <person name="Wingate V."/>
            <person name="Zouine M."/>
            <person name="Glaser P."/>
            <person name="Boemare N."/>
            <person name="Danchin A."/>
            <person name="Kunst F."/>
        </authorList>
    </citation>
    <scope>NUCLEOTIDE SEQUENCE [LARGE SCALE GENOMIC DNA]</scope>
    <source>
        <strain>DSM 15139 / CIP 105565 / TT01</strain>
    </source>
</reference>
<comment type="function">
    <text evidence="1">Catalyzes the condensation of the acetyl group of acetyl-CoA with 3-methyl-2-oxobutanoate (2-ketoisovalerate) to form 3-carboxy-3-hydroxy-4-methylpentanoate (2-isopropylmalate).</text>
</comment>
<comment type="catalytic activity">
    <reaction evidence="1">
        <text>3-methyl-2-oxobutanoate + acetyl-CoA + H2O = (2S)-2-isopropylmalate + CoA + H(+)</text>
        <dbReference type="Rhea" id="RHEA:21524"/>
        <dbReference type="ChEBI" id="CHEBI:1178"/>
        <dbReference type="ChEBI" id="CHEBI:11851"/>
        <dbReference type="ChEBI" id="CHEBI:15377"/>
        <dbReference type="ChEBI" id="CHEBI:15378"/>
        <dbReference type="ChEBI" id="CHEBI:57287"/>
        <dbReference type="ChEBI" id="CHEBI:57288"/>
        <dbReference type="EC" id="2.3.3.13"/>
    </reaction>
</comment>
<comment type="cofactor">
    <cofactor evidence="1">
        <name>Mn(2+)</name>
        <dbReference type="ChEBI" id="CHEBI:29035"/>
    </cofactor>
</comment>
<comment type="pathway">
    <text evidence="1">Amino-acid biosynthesis; L-leucine biosynthesis; L-leucine from 3-methyl-2-oxobutanoate: step 1/4.</text>
</comment>
<comment type="subunit">
    <text evidence="1">Homodimer.</text>
</comment>
<comment type="subcellular location">
    <subcellularLocation>
        <location evidence="1">Cytoplasm</location>
    </subcellularLocation>
</comment>
<comment type="similarity">
    <text evidence="1">Belongs to the alpha-IPM synthase/homocitrate synthase family. LeuA type 1 subfamily.</text>
</comment>